<gene>
    <name evidence="2" type="primary">deoD</name>
    <name type="ordered locus">KPK_4774</name>
</gene>
<accession>B5Y274</accession>
<feature type="chain" id="PRO_1000186204" description="Purine nucleoside phosphorylase DeoD-type">
    <location>
        <begin position="1"/>
        <end position="239"/>
    </location>
</feature>
<feature type="active site" description="Proton donor" evidence="2">
    <location>
        <position position="205"/>
    </location>
</feature>
<feature type="binding site" evidence="1">
    <location>
        <position position="5"/>
    </location>
    <ligand>
        <name>a purine D-ribonucleoside</name>
        <dbReference type="ChEBI" id="CHEBI:142355"/>
        <note>ligand shared between dimeric partners</note>
    </ligand>
</feature>
<feature type="binding site" description="in other chain" evidence="1">
    <location>
        <position position="21"/>
    </location>
    <ligand>
        <name>phosphate</name>
        <dbReference type="ChEBI" id="CHEBI:43474"/>
        <note>ligand shared between dimeric partners</note>
    </ligand>
</feature>
<feature type="binding site" description="in other chain" evidence="1">
    <location>
        <position position="25"/>
    </location>
    <ligand>
        <name>phosphate</name>
        <dbReference type="ChEBI" id="CHEBI:43474"/>
        <note>ligand shared between dimeric partners</note>
    </ligand>
</feature>
<feature type="binding site" evidence="1">
    <location>
        <position position="44"/>
    </location>
    <ligand>
        <name>phosphate</name>
        <dbReference type="ChEBI" id="CHEBI:43474"/>
        <note>ligand shared between dimeric partners</note>
    </ligand>
</feature>
<feature type="binding site" description="in other chain" evidence="1">
    <location>
        <begin position="88"/>
        <end position="91"/>
    </location>
    <ligand>
        <name>phosphate</name>
        <dbReference type="ChEBI" id="CHEBI:43474"/>
        <note>ligand shared between dimeric partners</note>
    </ligand>
</feature>
<feature type="binding site" description="in other chain" evidence="1">
    <location>
        <begin position="180"/>
        <end position="182"/>
    </location>
    <ligand>
        <name>a purine D-ribonucleoside</name>
        <dbReference type="ChEBI" id="CHEBI:142355"/>
        <note>ligand shared between dimeric partners</note>
    </ligand>
</feature>
<feature type="binding site" description="in other chain" evidence="1">
    <location>
        <begin position="204"/>
        <end position="205"/>
    </location>
    <ligand>
        <name>a purine D-ribonucleoside</name>
        <dbReference type="ChEBI" id="CHEBI:142355"/>
        <note>ligand shared between dimeric partners</note>
    </ligand>
</feature>
<feature type="site" description="Important for catalytic activity" evidence="2">
    <location>
        <position position="218"/>
    </location>
</feature>
<protein>
    <recommendedName>
        <fullName evidence="2">Purine nucleoside phosphorylase DeoD-type</fullName>
        <shortName evidence="2">PNP</shortName>
        <ecNumber evidence="2">2.4.2.1</ecNumber>
    </recommendedName>
</protein>
<evidence type="ECO:0000250" key="1">
    <source>
        <dbReference type="UniProtKB" id="P50389"/>
    </source>
</evidence>
<evidence type="ECO:0000255" key="2">
    <source>
        <dbReference type="HAMAP-Rule" id="MF_01627"/>
    </source>
</evidence>
<comment type="function">
    <text evidence="2">Catalyzes the reversible phosphorolytic breakdown of the N-glycosidic bond in the beta-(deoxy)ribonucleoside molecules, with the formation of the corresponding free purine bases and pentose-1-phosphate.</text>
</comment>
<comment type="catalytic activity">
    <reaction evidence="2">
        <text>a purine D-ribonucleoside + phosphate = a purine nucleobase + alpha-D-ribose 1-phosphate</text>
        <dbReference type="Rhea" id="RHEA:19805"/>
        <dbReference type="ChEBI" id="CHEBI:26386"/>
        <dbReference type="ChEBI" id="CHEBI:43474"/>
        <dbReference type="ChEBI" id="CHEBI:57720"/>
        <dbReference type="ChEBI" id="CHEBI:142355"/>
        <dbReference type="EC" id="2.4.2.1"/>
    </reaction>
</comment>
<comment type="catalytic activity">
    <reaction evidence="2">
        <text>a purine 2'-deoxy-D-ribonucleoside + phosphate = a purine nucleobase + 2-deoxy-alpha-D-ribose 1-phosphate</text>
        <dbReference type="Rhea" id="RHEA:36431"/>
        <dbReference type="ChEBI" id="CHEBI:26386"/>
        <dbReference type="ChEBI" id="CHEBI:43474"/>
        <dbReference type="ChEBI" id="CHEBI:57259"/>
        <dbReference type="ChEBI" id="CHEBI:142361"/>
        <dbReference type="EC" id="2.4.2.1"/>
    </reaction>
</comment>
<comment type="subunit">
    <text evidence="2">Homohexamer; trimer of homodimers.</text>
</comment>
<comment type="similarity">
    <text evidence="2">Belongs to the PNP/UDP phosphorylase family.</text>
</comment>
<organism>
    <name type="scientific">Klebsiella pneumoniae (strain 342)</name>
    <dbReference type="NCBI Taxonomy" id="507522"/>
    <lineage>
        <taxon>Bacteria</taxon>
        <taxon>Pseudomonadati</taxon>
        <taxon>Pseudomonadota</taxon>
        <taxon>Gammaproteobacteria</taxon>
        <taxon>Enterobacterales</taxon>
        <taxon>Enterobacteriaceae</taxon>
        <taxon>Klebsiella/Raoultella group</taxon>
        <taxon>Klebsiella</taxon>
        <taxon>Klebsiella pneumoniae complex</taxon>
    </lineage>
</organism>
<sequence>MATPHINAEMGDFADVVLMPGDPLRAKHIAETFLEDVREVNNVRGMLGFTGTYKGRKISVMGHGMGIPSCSIYTKELITDFGVKKIIRVGSCGAVREDVKLRDVVIGMGACTDSKVNRLRFKDHDFAAIADFGMVRNAVDAAKALGVDARVGNIFSADLFYTPDPSMFDVMEKYGILGVEMEAAGIYGVAAEFGAKALTICTVSDHIRTHEQTTAAERQTTFNDMIKIALESVLLGDKE</sequence>
<reference key="1">
    <citation type="journal article" date="2008" name="PLoS Genet.">
        <title>Complete genome sequence of the N2-fixing broad host range endophyte Klebsiella pneumoniae 342 and virulence predictions verified in mice.</title>
        <authorList>
            <person name="Fouts D.E."/>
            <person name="Tyler H.L."/>
            <person name="DeBoy R.T."/>
            <person name="Daugherty S."/>
            <person name="Ren Q."/>
            <person name="Badger J.H."/>
            <person name="Durkin A.S."/>
            <person name="Huot H."/>
            <person name="Shrivastava S."/>
            <person name="Kothari S."/>
            <person name="Dodson R.J."/>
            <person name="Mohamoud Y."/>
            <person name="Khouri H."/>
            <person name="Roesch L.F.W."/>
            <person name="Krogfelt K.A."/>
            <person name="Struve C."/>
            <person name="Triplett E.W."/>
            <person name="Methe B.A."/>
        </authorList>
    </citation>
    <scope>NUCLEOTIDE SEQUENCE [LARGE SCALE GENOMIC DNA]</scope>
    <source>
        <strain>342</strain>
    </source>
</reference>
<proteinExistence type="inferred from homology"/>
<name>DEOD_KLEP3</name>
<dbReference type="EC" id="2.4.2.1" evidence="2"/>
<dbReference type="EMBL" id="CP000964">
    <property type="protein sequence ID" value="ACI09257.1"/>
    <property type="molecule type" value="Genomic_DNA"/>
</dbReference>
<dbReference type="SMR" id="B5Y274"/>
<dbReference type="KEGG" id="kpe:KPK_4774"/>
<dbReference type="HOGENOM" id="CLU_068457_2_0_6"/>
<dbReference type="Proteomes" id="UP000001734">
    <property type="component" value="Chromosome"/>
</dbReference>
<dbReference type="GO" id="GO:0005829">
    <property type="term" value="C:cytosol"/>
    <property type="evidence" value="ECO:0007669"/>
    <property type="project" value="TreeGrafter"/>
</dbReference>
<dbReference type="GO" id="GO:0004731">
    <property type="term" value="F:purine-nucleoside phosphorylase activity"/>
    <property type="evidence" value="ECO:0007669"/>
    <property type="project" value="UniProtKB-UniRule"/>
</dbReference>
<dbReference type="GO" id="GO:0006152">
    <property type="term" value="P:purine nucleoside catabolic process"/>
    <property type="evidence" value="ECO:0007669"/>
    <property type="project" value="TreeGrafter"/>
</dbReference>
<dbReference type="CDD" id="cd09006">
    <property type="entry name" value="PNP_EcPNPI-like"/>
    <property type="match status" value="1"/>
</dbReference>
<dbReference type="FunFam" id="3.40.50.1580:FF:000002">
    <property type="entry name" value="Purine nucleoside phosphorylase DeoD-type"/>
    <property type="match status" value="1"/>
</dbReference>
<dbReference type="Gene3D" id="3.40.50.1580">
    <property type="entry name" value="Nucleoside phosphorylase domain"/>
    <property type="match status" value="1"/>
</dbReference>
<dbReference type="HAMAP" id="MF_01627">
    <property type="entry name" value="Pur_nucleosid_phosp"/>
    <property type="match status" value="1"/>
</dbReference>
<dbReference type="InterPro" id="IPR004402">
    <property type="entry name" value="DeoD-type"/>
</dbReference>
<dbReference type="InterPro" id="IPR018016">
    <property type="entry name" value="Nucleoside_phosphorylase_CS"/>
</dbReference>
<dbReference type="InterPro" id="IPR000845">
    <property type="entry name" value="Nucleoside_phosphorylase_d"/>
</dbReference>
<dbReference type="InterPro" id="IPR035994">
    <property type="entry name" value="Nucleoside_phosphorylase_sf"/>
</dbReference>
<dbReference type="NCBIfam" id="TIGR00107">
    <property type="entry name" value="deoD"/>
    <property type="match status" value="1"/>
</dbReference>
<dbReference type="NCBIfam" id="NF004489">
    <property type="entry name" value="PRK05819.1"/>
    <property type="match status" value="1"/>
</dbReference>
<dbReference type="NCBIfam" id="NF009914">
    <property type="entry name" value="PRK13374.1"/>
    <property type="match status" value="1"/>
</dbReference>
<dbReference type="PANTHER" id="PTHR43691:SF2">
    <property type="entry name" value="PURINE NUCLEOSIDE PHOSPHORYLASE DEOD-TYPE"/>
    <property type="match status" value="1"/>
</dbReference>
<dbReference type="PANTHER" id="PTHR43691">
    <property type="entry name" value="URIDINE PHOSPHORYLASE"/>
    <property type="match status" value="1"/>
</dbReference>
<dbReference type="Pfam" id="PF01048">
    <property type="entry name" value="PNP_UDP_1"/>
    <property type="match status" value="1"/>
</dbReference>
<dbReference type="SUPFAM" id="SSF53167">
    <property type="entry name" value="Purine and uridine phosphorylases"/>
    <property type="match status" value="1"/>
</dbReference>
<dbReference type="PROSITE" id="PS01232">
    <property type="entry name" value="PNP_UDP_1"/>
    <property type="match status" value="1"/>
</dbReference>
<keyword id="KW-0328">Glycosyltransferase</keyword>
<keyword id="KW-0808">Transferase</keyword>